<name>H2B4_ORYSJ</name>
<keyword id="KW-0007">Acetylation</keyword>
<keyword id="KW-0158">Chromosome</keyword>
<keyword id="KW-0238">DNA-binding</keyword>
<keyword id="KW-1017">Isopeptide bond</keyword>
<keyword id="KW-0544">Nucleosome core</keyword>
<keyword id="KW-0539">Nucleus</keyword>
<keyword id="KW-1185">Reference proteome</keyword>
<keyword id="KW-0832">Ubl conjugation</keyword>
<sequence>MAPKAEKKPAAKKPAEEEPAAEKAEKAPAGKKPKAEKRLPAGKAEKGSGEGKKAGRKKAKKSVETYKIYIFKVLKQVHPDIGISSKAMSIMNSFINDIFEKLAGESAKLARYNKKPTITSREIQTSVRLVLPGELAKHAVSEGTKAVTKFTSA</sequence>
<evidence type="ECO:0000250" key="1"/>
<evidence type="ECO:0000256" key="2">
    <source>
        <dbReference type="SAM" id="MobiDB-lite"/>
    </source>
</evidence>
<evidence type="ECO:0000305" key="3"/>
<feature type="initiator methionine" description="Removed" evidence="1">
    <location>
        <position position="1"/>
    </location>
</feature>
<feature type="chain" id="PRO_0000294183" description="Histone H2B.4">
    <location>
        <begin position="2"/>
        <end position="153"/>
    </location>
</feature>
<feature type="region of interest" description="Disordered" evidence="2">
    <location>
        <begin position="1"/>
        <end position="61"/>
    </location>
</feature>
<feature type="compositionally biased region" description="Basic and acidic residues" evidence="2">
    <location>
        <begin position="1"/>
        <end position="28"/>
    </location>
</feature>
<feature type="compositionally biased region" description="Basic and acidic residues" evidence="2">
    <location>
        <begin position="36"/>
        <end position="53"/>
    </location>
</feature>
<feature type="modified residue" description="N6-acetyllysine" evidence="1">
    <location>
        <position position="7"/>
    </location>
</feature>
<feature type="modified residue" description="N6-acetyllysine" evidence="1">
    <location>
        <position position="37"/>
    </location>
</feature>
<feature type="cross-link" description="Glycyl lysine isopeptide (Lys-Gly) (interchain with G-Cter in ubiquitin)" evidence="1">
    <location>
        <position position="149"/>
    </location>
</feature>
<reference key="1">
    <citation type="journal article" date="2002" name="Nature">
        <title>The genome sequence and structure of rice chromosome 1.</title>
        <authorList>
            <person name="Sasaki T."/>
            <person name="Matsumoto T."/>
            <person name="Yamamoto K."/>
            <person name="Sakata K."/>
            <person name="Baba T."/>
            <person name="Katayose Y."/>
            <person name="Wu J."/>
            <person name="Niimura Y."/>
            <person name="Cheng Z."/>
            <person name="Nagamura Y."/>
            <person name="Antonio B.A."/>
            <person name="Kanamori H."/>
            <person name="Hosokawa S."/>
            <person name="Masukawa M."/>
            <person name="Arikawa K."/>
            <person name="Chiden Y."/>
            <person name="Hayashi M."/>
            <person name="Okamoto M."/>
            <person name="Ando T."/>
            <person name="Aoki H."/>
            <person name="Arita K."/>
            <person name="Hamada M."/>
            <person name="Harada C."/>
            <person name="Hijishita S."/>
            <person name="Honda M."/>
            <person name="Ichikawa Y."/>
            <person name="Idonuma A."/>
            <person name="Iijima M."/>
            <person name="Ikeda M."/>
            <person name="Ikeno M."/>
            <person name="Ito S."/>
            <person name="Ito T."/>
            <person name="Ito Y."/>
            <person name="Ito Y."/>
            <person name="Iwabuchi A."/>
            <person name="Kamiya K."/>
            <person name="Karasawa W."/>
            <person name="Katagiri S."/>
            <person name="Kikuta A."/>
            <person name="Kobayashi N."/>
            <person name="Kono I."/>
            <person name="Machita K."/>
            <person name="Maehara T."/>
            <person name="Mizuno H."/>
            <person name="Mizubayashi T."/>
            <person name="Mukai Y."/>
            <person name="Nagasaki H."/>
            <person name="Nakashima M."/>
            <person name="Nakama Y."/>
            <person name="Nakamichi Y."/>
            <person name="Nakamura M."/>
            <person name="Namiki N."/>
            <person name="Negishi M."/>
            <person name="Ohta I."/>
            <person name="Ono N."/>
            <person name="Saji S."/>
            <person name="Sakai K."/>
            <person name="Shibata M."/>
            <person name="Shimokawa T."/>
            <person name="Shomura A."/>
            <person name="Song J."/>
            <person name="Takazaki Y."/>
            <person name="Terasawa K."/>
            <person name="Tsuji K."/>
            <person name="Waki K."/>
            <person name="Yamagata H."/>
            <person name="Yamane H."/>
            <person name="Yoshiki S."/>
            <person name="Yoshihara R."/>
            <person name="Yukawa K."/>
            <person name="Zhong H."/>
            <person name="Iwama H."/>
            <person name="Endo T."/>
            <person name="Ito H."/>
            <person name="Hahn J.H."/>
            <person name="Kim H.-I."/>
            <person name="Eun M.-Y."/>
            <person name="Yano M."/>
            <person name="Jiang J."/>
            <person name="Gojobori T."/>
        </authorList>
    </citation>
    <scope>NUCLEOTIDE SEQUENCE [LARGE SCALE GENOMIC DNA]</scope>
    <source>
        <strain>cv. Nipponbare</strain>
    </source>
</reference>
<reference key="2">
    <citation type="journal article" date="2005" name="Nature">
        <title>The map-based sequence of the rice genome.</title>
        <authorList>
            <consortium name="International rice genome sequencing project (IRGSP)"/>
        </authorList>
    </citation>
    <scope>NUCLEOTIDE SEQUENCE [LARGE SCALE GENOMIC DNA]</scope>
    <source>
        <strain>cv. Nipponbare</strain>
    </source>
</reference>
<reference key="3">
    <citation type="journal article" date="2008" name="Nucleic Acids Res.">
        <title>The rice annotation project database (RAP-DB): 2008 update.</title>
        <authorList>
            <consortium name="The rice annotation project (RAP)"/>
        </authorList>
    </citation>
    <scope>GENOME REANNOTATION</scope>
    <source>
        <strain>cv. Nipponbare</strain>
    </source>
</reference>
<reference key="4">
    <citation type="journal article" date="2013" name="Rice">
        <title>Improvement of the Oryza sativa Nipponbare reference genome using next generation sequence and optical map data.</title>
        <authorList>
            <person name="Kawahara Y."/>
            <person name="de la Bastide M."/>
            <person name="Hamilton J.P."/>
            <person name="Kanamori H."/>
            <person name="McCombie W.R."/>
            <person name="Ouyang S."/>
            <person name="Schwartz D.C."/>
            <person name="Tanaka T."/>
            <person name="Wu J."/>
            <person name="Zhou S."/>
            <person name="Childs K.L."/>
            <person name="Davidson R.M."/>
            <person name="Lin H."/>
            <person name="Quesada-Ocampo L."/>
            <person name="Vaillancourt B."/>
            <person name="Sakai H."/>
            <person name="Lee S.S."/>
            <person name="Kim J."/>
            <person name="Numa H."/>
            <person name="Itoh T."/>
            <person name="Buell C.R."/>
            <person name="Matsumoto T."/>
        </authorList>
    </citation>
    <scope>GENOME REANNOTATION</scope>
    <source>
        <strain>cv. Nipponbare</strain>
    </source>
</reference>
<reference key="5">
    <citation type="journal article" date="2005" name="PLoS Biol.">
        <title>The genomes of Oryza sativa: a history of duplications.</title>
        <authorList>
            <person name="Yu J."/>
            <person name="Wang J."/>
            <person name="Lin W."/>
            <person name="Li S."/>
            <person name="Li H."/>
            <person name="Zhou J."/>
            <person name="Ni P."/>
            <person name="Dong W."/>
            <person name="Hu S."/>
            <person name="Zeng C."/>
            <person name="Zhang J."/>
            <person name="Zhang Y."/>
            <person name="Li R."/>
            <person name="Xu Z."/>
            <person name="Li S."/>
            <person name="Li X."/>
            <person name="Zheng H."/>
            <person name="Cong L."/>
            <person name="Lin L."/>
            <person name="Yin J."/>
            <person name="Geng J."/>
            <person name="Li G."/>
            <person name="Shi J."/>
            <person name="Liu J."/>
            <person name="Lv H."/>
            <person name="Li J."/>
            <person name="Wang J."/>
            <person name="Deng Y."/>
            <person name="Ran L."/>
            <person name="Shi X."/>
            <person name="Wang X."/>
            <person name="Wu Q."/>
            <person name="Li C."/>
            <person name="Ren X."/>
            <person name="Wang J."/>
            <person name="Wang X."/>
            <person name="Li D."/>
            <person name="Liu D."/>
            <person name="Zhang X."/>
            <person name="Ji Z."/>
            <person name="Zhao W."/>
            <person name="Sun Y."/>
            <person name="Zhang Z."/>
            <person name="Bao J."/>
            <person name="Han Y."/>
            <person name="Dong L."/>
            <person name="Ji J."/>
            <person name="Chen P."/>
            <person name="Wu S."/>
            <person name="Liu J."/>
            <person name="Xiao Y."/>
            <person name="Bu D."/>
            <person name="Tan J."/>
            <person name="Yang L."/>
            <person name="Ye C."/>
            <person name="Zhang J."/>
            <person name="Xu J."/>
            <person name="Zhou Y."/>
            <person name="Yu Y."/>
            <person name="Zhang B."/>
            <person name="Zhuang S."/>
            <person name="Wei H."/>
            <person name="Liu B."/>
            <person name="Lei M."/>
            <person name="Yu H."/>
            <person name="Li Y."/>
            <person name="Xu H."/>
            <person name="Wei S."/>
            <person name="He X."/>
            <person name="Fang L."/>
            <person name="Zhang Z."/>
            <person name="Zhang Y."/>
            <person name="Huang X."/>
            <person name="Su Z."/>
            <person name="Tong W."/>
            <person name="Li J."/>
            <person name="Tong Z."/>
            <person name="Li S."/>
            <person name="Ye J."/>
            <person name="Wang L."/>
            <person name="Fang L."/>
            <person name="Lei T."/>
            <person name="Chen C.-S."/>
            <person name="Chen H.-C."/>
            <person name="Xu Z."/>
            <person name="Li H."/>
            <person name="Huang H."/>
            <person name="Zhang F."/>
            <person name="Xu H."/>
            <person name="Li N."/>
            <person name="Zhao C."/>
            <person name="Li S."/>
            <person name="Dong L."/>
            <person name="Huang Y."/>
            <person name="Li L."/>
            <person name="Xi Y."/>
            <person name="Qi Q."/>
            <person name="Li W."/>
            <person name="Zhang B."/>
            <person name="Hu W."/>
            <person name="Zhang Y."/>
            <person name="Tian X."/>
            <person name="Jiao Y."/>
            <person name="Liang X."/>
            <person name="Jin J."/>
            <person name="Gao L."/>
            <person name="Zheng W."/>
            <person name="Hao B."/>
            <person name="Liu S.-M."/>
            <person name="Wang W."/>
            <person name="Yuan L."/>
            <person name="Cao M."/>
            <person name="McDermott J."/>
            <person name="Samudrala R."/>
            <person name="Wang J."/>
            <person name="Wong G.K.-S."/>
            <person name="Yang H."/>
        </authorList>
    </citation>
    <scope>NUCLEOTIDE SEQUENCE [LARGE SCALE GENOMIC DNA]</scope>
    <source>
        <strain>cv. Nipponbare</strain>
    </source>
</reference>
<dbReference type="EMBL" id="AP002540">
    <property type="protein sequence ID" value="BAB44008.1"/>
    <property type="molecule type" value="Genomic_DNA"/>
</dbReference>
<dbReference type="EMBL" id="AP008207">
    <property type="protein sequence ID" value="BAF03940.1"/>
    <property type="molecule type" value="Genomic_DNA"/>
</dbReference>
<dbReference type="EMBL" id="AP014957">
    <property type="status" value="NOT_ANNOTATED_CDS"/>
    <property type="molecule type" value="Genomic_DNA"/>
</dbReference>
<dbReference type="EMBL" id="CM000138">
    <property type="protein sequence ID" value="EAZ10547.1"/>
    <property type="molecule type" value="Genomic_DNA"/>
</dbReference>
<dbReference type="RefSeq" id="XP_015645087.1">
    <property type="nucleotide sequence ID" value="XM_015789601.1"/>
</dbReference>
<dbReference type="SMR" id="Q94JJ4"/>
<dbReference type="FunCoup" id="Q94JJ4">
    <property type="interactions" value="1710"/>
</dbReference>
<dbReference type="STRING" id="39947.Q94JJ4"/>
<dbReference type="PaxDb" id="39947-Q94JJ4"/>
<dbReference type="EnsemblPlants" id="Os01t0149600-01">
    <property type="protein sequence ID" value="Os01t0149600-01"/>
    <property type="gene ID" value="Os01g0149600"/>
</dbReference>
<dbReference type="Gramene" id="Os01t0149600-01">
    <property type="protein sequence ID" value="Os01t0149600-01"/>
    <property type="gene ID" value="Os01g0149600"/>
</dbReference>
<dbReference type="KEGG" id="dosa:Os01g0149600"/>
<dbReference type="InParanoid" id="Q94JJ4"/>
<dbReference type="Proteomes" id="UP000000763">
    <property type="component" value="Chromosome 1"/>
</dbReference>
<dbReference type="Proteomes" id="UP000007752">
    <property type="component" value="Chromosome 1"/>
</dbReference>
<dbReference type="Proteomes" id="UP000059680">
    <property type="component" value="Chromosome 1"/>
</dbReference>
<dbReference type="ExpressionAtlas" id="Q94JJ4">
    <property type="expression patterns" value="baseline and differential"/>
</dbReference>
<dbReference type="GO" id="GO:0000786">
    <property type="term" value="C:nucleosome"/>
    <property type="evidence" value="ECO:0007669"/>
    <property type="project" value="UniProtKB-KW"/>
</dbReference>
<dbReference type="GO" id="GO:0005634">
    <property type="term" value="C:nucleus"/>
    <property type="evidence" value="ECO:0007669"/>
    <property type="project" value="UniProtKB-SubCell"/>
</dbReference>
<dbReference type="GO" id="GO:0003677">
    <property type="term" value="F:DNA binding"/>
    <property type="evidence" value="ECO:0000318"/>
    <property type="project" value="GO_Central"/>
</dbReference>
<dbReference type="GO" id="GO:0046982">
    <property type="term" value="F:protein heterodimerization activity"/>
    <property type="evidence" value="ECO:0007669"/>
    <property type="project" value="InterPro"/>
</dbReference>
<dbReference type="GO" id="GO:0030527">
    <property type="term" value="F:structural constituent of chromatin"/>
    <property type="evidence" value="ECO:0007669"/>
    <property type="project" value="InterPro"/>
</dbReference>
<dbReference type="CDD" id="cd22910">
    <property type="entry name" value="HFD_H2B"/>
    <property type="match status" value="1"/>
</dbReference>
<dbReference type="FunFam" id="1.10.20.10:FF:000014">
    <property type="entry name" value="Histone H2B"/>
    <property type="match status" value="1"/>
</dbReference>
<dbReference type="Gene3D" id="1.10.20.10">
    <property type="entry name" value="Histone, subunit A"/>
    <property type="match status" value="1"/>
</dbReference>
<dbReference type="InterPro" id="IPR009072">
    <property type="entry name" value="Histone-fold"/>
</dbReference>
<dbReference type="InterPro" id="IPR007125">
    <property type="entry name" value="Histone_H2A/H2B/H3"/>
</dbReference>
<dbReference type="InterPro" id="IPR000558">
    <property type="entry name" value="Histone_H2B"/>
</dbReference>
<dbReference type="InterPro" id="IPR055333">
    <property type="entry name" value="HISTONE_H2B_site"/>
</dbReference>
<dbReference type="PANTHER" id="PTHR23428">
    <property type="entry name" value="HISTONE H2B"/>
    <property type="match status" value="1"/>
</dbReference>
<dbReference type="Pfam" id="PF00125">
    <property type="entry name" value="Histone"/>
    <property type="match status" value="1"/>
</dbReference>
<dbReference type="PRINTS" id="PR00621">
    <property type="entry name" value="HISTONEH2B"/>
</dbReference>
<dbReference type="SMART" id="SM00427">
    <property type="entry name" value="H2B"/>
    <property type="match status" value="1"/>
</dbReference>
<dbReference type="SUPFAM" id="SSF47113">
    <property type="entry name" value="Histone-fold"/>
    <property type="match status" value="1"/>
</dbReference>
<dbReference type="PROSITE" id="PS00357">
    <property type="entry name" value="HISTONE_H2B"/>
    <property type="match status" value="1"/>
</dbReference>
<protein>
    <recommendedName>
        <fullName>Histone H2B.4</fullName>
    </recommendedName>
</protein>
<proteinExistence type="inferred from homology"/>
<accession>Q94JJ4</accession>
<comment type="function">
    <text>Core component of nucleosome. Nucleosomes wrap and compact DNA into chromatin, limiting DNA accessibility to the cellular machineries which require DNA as a template. Histones thereby play a central role in transcription regulation, DNA repair, DNA replication and chromosomal stability. DNA accessibility is regulated via a complex set of post-translational modifications of histones, also called histone code, and nucleosome remodeling.</text>
</comment>
<comment type="subunit">
    <text>The nucleosome is a histone octamer containing two molecules each of H2A, H2B, H3 and H4 assembled in one H3-H4 heterotetramer and two H2A-H2B heterodimers. The octamer wraps approximately 147 bp of DNA.</text>
</comment>
<comment type="subcellular location">
    <subcellularLocation>
        <location evidence="1">Nucleus</location>
    </subcellularLocation>
    <subcellularLocation>
        <location evidence="1">Chromosome</location>
    </subcellularLocation>
</comment>
<comment type="PTM">
    <text evidence="1">Can be acetylated to form H2BK6ac and H2BK33ac.</text>
</comment>
<comment type="PTM">
    <text evidence="1">Monoubiquitinated by BRE1 to form H2BK143ub1 and deubiquitinated by UBP26. Required for heterochromatic histone H3 di- and trimethylation at H3K4me. May give a specific tag for epigenetic transcriptional activation (By similarity).</text>
</comment>
<comment type="similarity">
    <text evidence="3">Belongs to the histone H2B family.</text>
</comment>
<comment type="caution">
    <text evidence="3">To ensure consistency between histone entries, we follow the 'Brno' nomenclature for histone modifications, with positions referring to those used in the literature for the 'closest' model organism. Due to slight variations in histone sequences between organisms and to the presence of initiator methionine in UniProtKB/Swiss-Prot sequences, the actual positions of modified amino acids in the sequence generally differ. In this entry the following conventions are used: H2BK6ac = acetylated Lys-7; H2BK33ac = acetylated Lys-37; H2BK143ub1 = monoubiquitinated Lys-149.</text>
</comment>
<gene>
    <name type="primary">H2B.4</name>
    <name type="ordered locus">Os01g0149600</name>
    <name type="ordered locus">LOC_Os01g05630</name>
    <name type="ORF">OsJ_000372</name>
    <name type="ORF">P0434B04.31</name>
</gene>
<organism>
    <name type="scientific">Oryza sativa subsp. japonica</name>
    <name type="common">Rice</name>
    <dbReference type="NCBI Taxonomy" id="39947"/>
    <lineage>
        <taxon>Eukaryota</taxon>
        <taxon>Viridiplantae</taxon>
        <taxon>Streptophyta</taxon>
        <taxon>Embryophyta</taxon>
        <taxon>Tracheophyta</taxon>
        <taxon>Spermatophyta</taxon>
        <taxon>Magnoliopsida</taxon>
        <taxon>Liliopsida</taxon>
        <taxon>Poales</taxon>
        <taxon>Poaceae</taxon>
        <taxon>BOP clade</taxon>
        <taxon>Oryzoideae</taxon>
        <taxon>Oryzeae</taxon>
        <taxon>Oryzinae</taxon>
        <taxon>Oryza</taxon>
        <taxon>Oryza sativa</taxon>
    </lineage>
</organism>